<accession>Q5H2E6</accession>
<organism>
    <name type="scientific">Xanthomonas oryzae pv. oryzae (strain KACC10331 / KXO85)</name>
    <dbReference type="NCBI Taxonomy" id="291331"/>
    <lineage>
        <taxon>Bacteria</taxon>
        <taxon>Pseudomonadati</taxon>
        <taxon>Pseudomonadota</taxon>
        <taxon>Gammaproteobacteria</taxon>
        <taxon>Lysobacterales</taxon>
        <taxon>Lysobacteraceae</taxon>
        <taxon>Xanthomonas</taxon>
    </lineage>
</organism>
<gene>
    <name evidence="1" type="primary">rpmA</name>
    <name type="ordered locus">XOO1621</name>
</gene>
<proteinExistence type="inferred from homology"/>
<reference key="1">
    <citation type="journal article" date="2005" name="Nucleic Acids Res.">
        <title>The genome sequence of Xanthomonas oryzae pathovar oryzae KACC10331, the bacterial blight pathogen of rice.</title>
        <authorList>
            <person name="Lee B.-M."/>
            <person name="Park Y.-J."/>
            <person name="Park D.-S."/>
            <person name="Kang H.-W."/>
            <person name="Kim J.-G."/>
            <person name="Song E.-S."/>
            <person name="Park I.-C."/>
            <person name="Yoon U.-H."/>
            <person name="Hahn J.-H."/>
            <person name="Koo B.-S."/>
            <person name="Lee G.-B."/>
            <person name="Kim H."/>
            <person name="Park H.-S."/>
            <person name="Yoon K.-O."/>
            <person name="Kim J.-H."/>
            <person name="Jung C.-H."/>
            <person name="Koh N.-H."/>
            <person name="Seo J.-S."/>
            <person name="Go S.-J."/>
        </authorList>
    </citation>
    <scope>NUCLEOTIDE SEQUENCE [LARGE SCALE GENOMIC DNA]</scope>
    <source>
        <strain>KACC10331 / KXO85</strain>
    </source>
</reference>
<feature type="chain" id="PRO_0000181210" description="Large ribosomal subunit protein bL27">
    <location>
        <begin position="1"/>
        <end position="86"/>
    </location>
</feature>
<evidence type="ECO:0000255" key="1">
    <source>
        <dbReference type="HAMAP-Rule" id="MF_00539"/>
    </source>
</evidence>
<evidence type="ECO:0000305" key="2"/>
<protein>
    <recommendedName>
        <fullName evidence="1">Large ribosomal subunit protein bL27</fullName>
    </recommendedName>
    <alternativeName>
        <fullName evidence="2">50S ribosomal protein L27</fullName>
    </alternativeName>
</protein>
<sequence length="86" mass="9101">MAHKKGVGSSRNGRDSNPKYLGVKIFGGQAIDAGNIIVRQRGTQFHPGAGVGLGRDHTLFALVDGKVEFSVKGVKKRRTVSVVAEA</sequence>
<keyword id="KW-1185">Reference proteome</keyword>
<keyword id="KW-0687">Ribonucleoprotein</keyword>
<keyword id="KW-0689">Ribosomal protein</keyword>
<dbReference type="EMBL" id="AE013598">
    <property type="protein sequence ID" value="AAW74875.1"/>
    <property type="molecule type" value="Genomic_DNA"/>
</dbReference>
<dbReference type="SMR" id="Q5H2E6"/>
<dbReference type="STRING" id="291331.XOO1621"/>
<dbReference type="KEGG" id="xoo:XOO1621"/>
<dbReference type="HOGENOM" id="CLU_095424_4_1_6"/>
<dbReference type="Proteomes" id="UP000006735">
    <property type="component" value="Chromosome"/>
</dbReference>
<dbReference type="GO" id="GO:0022625">
    <property type="term" value="C:cytosolic large ribosomal subunit"/>
    <property type="evidence" value="ECO:0007669"/>
    <property type="project" value="TreeGrafter"/>
</dbReference>
<dbReference type="GO" id="GO:0003735">
    <property type="term" value="F:structural constituent of ribosome"/>
    <property type="evidence" value="ECO:0007669"/>
    <property type="project" value="InterPro"/>
</dbReference>
<dbReference type="GO" id="GO:0006412">
    <property type="term" value="P:translation"/>
    <property type="evidence" value="ECO:0007669"/>
    <property type="project" value="UniProtKB-UniRule"/>
</dbReference>
<dbReference type="FunFam" id="2.40.50.100:FF:000001">
    <property type="entry name" value="50S ribosomal protein L27"/>
    <property type="match status" value="1"/>
</dbReference>
<dbReference type="Gene3D" id="2.40.50.100">
    <property type="match status" value="1"/>
</dbReference>
<dbReference type="HAMAP" id="MF_00539">
    <property type="entry name" value="Ribosomal_bL27"/>
    <property type="match status" value="1"/>
</dbReference>
<dbReference type="InterPro" id="IPR001684">
    <property type="entry name" value="Ribosomal_bL27"/>
</dbReference>
<dbReference type="InterPro" id="IPR018261">
    <property type="entry name" value="Ribosomal_bL27_CS"/>
</dbReference>
<dbReference type="NCBIfam" id="TIGR00062">
    <property type="entry name" value="L27"/>
    <property type="match status" value="1"/>
</dbReference>
<dbReference type="PANTHER" id="PTHR15893:SF0">
    <property type="entry name" value="LARGE RIBOSOMAL SUBUNIT PROTEIN BL27M"/>
    <property type="match status" value="1"/>
</dbReference>
<dbReference type="PANTHER" id="PTHR15893">
    <property type="entry name" value="RIBOSOMAL PROTEIN L27"/>
    <property type="match status" value="1"/>
</dbReference>
<dbReference type="Pfam" id="PF01016">
    <property type="entry name" value="Ribosomal_L27"/>
    <property type="match status" value="1"/>
</dbReference>
<dbReference type="PRINTS" id="PR00063">
    <property type="entry name" value="RIBOSOMALL27"/>
</dbReference>
<dbReference type="SUPFAM" id="SSF110324">
    <property type="entry name" value="Ribosomal L27 protein-like"/>
    <property type="match status" value="1"/>
</dbReference>
<dbReference type="PROSITE" id="PS00831">
    <property type="entry name" value="RIBOSOMAL_L27"/>
    <property type="match status" value="1"/>
</dbReference>
<name>RL27_XANOR</name>
<comment type="similarity">
    <text evidence="1">Belongs to the bacterial ribosomal protein bL27 family.</text>
</comment>